<gene>
    <name evidence="6" type="primary">Vapb</name>
</gene>
<organism>
    <name type="scientific">Rattus norvegicus</name>
    <name type="common">Rat</name>
    <dbReference type="NCBI Taxonomy" id="10116"/>
    <lineage>
        <taxon>Eukaryota</taxon>
        <taxon>Metazoa</taxon>
        <taxon>Chordata</taxon>
        <taxon>Craniata</taxon>
        <taxon>Vertebrata</taxon>
        <taxon>Euteleostomi</taxon>
        <taxon>Mammalia</taxon>
        <taxon>Eutheria</taxon>
        <taxon>Euarchontoglires</taxon>
        <taxon>Glires</taxon>
        <taxon>Rodentia</taxon>
        <taxon>Myomorpha</taxon>
        <taxon>Muroidea</taxon>
        <taxon>Muridae</taxon>
        <taxon>Murinae</taxon>
        <taxon>Rattus</taxon>
    </lineage>
</organism>
<protein>
    <recommendedName>
        <fullName evidence="5">Vesicle-associated membrane protein-associated protein B</fullName>
        <shortName>VAMP-B</shortName>
        <shortName>VAMP-associated protein B</shortName>
        <shortName>VAP-B</shortName>
    </recommendedName>
</protein>
<proteinExistence type="evidence at protein level"/>
<reference key="1">
    <citation type="journal article" date="1999" name="Biochem. Biophys. Res. Commun.">
        <title>Molecular cloning and characterization of mammalian homologues of vesicle-associated membrane protein-associated (VAMP-associated) proteins.</title>
        <authorList>
            <person name="Nishimura Y."/>
            <person name="Hayashi M."/>
            <person name="Inada H."/>
            <person name="Tanaka T."/>
        </authorList>
    </citation>
    <scope>NUCLEOTIDE SEQUENCE [MRNA]</scope>
    <source>
        <tissue>Heart</tissue>
    </source>
</reference>
<reference key="2">
    <citation type="journal article" date="2004" name="Genome Res.">
        <title>The status, quality, and expansion of the NIH full-length cDNA project: the Mammalian Gene Collection (MGC).</title>
        <authorList>
            <consortium name="The MGC Project Team"/>
        </authorList>
    </citation>
    <scope>NUCLEOTIDE SEQUENCE [LARGE SCALE MRNA]</scope>
</reference>
<reference key="3">
    <citation type="submission" date="2007-07" db="UniProtKB">
        <authorList>
            <person name="Lubec G."/>
            <person name="Kang S.U."/>
        </authorList>
    </citation>
    <scope>PROTEIN SEQUENCE OF 176-182</scope>
    <scope>IDENTIFICATION BY MASS SPECTROMETRY</scope>
    <source>
        <strain>Sprague-Dawley</strain>
        <tissue>Brain</tissue>
    </source>
</reference>
<reference key="4">
    <citation type="journal article" date="2012" name="Nat. Commun.">
        <title>Quantitative maps of protein phosphorylation sites across 14 different rat organs and tissues.</title>
        <authorList>
            <person name="Lundby A."/>
            <person name="Secher A."/>
            <person name="Lage K."/>
            <person name="Nordsborg N.B."/>
            <person name="Dmytriyev A."/>
            <person name="Lundby C."/>
            <person name="Olsen J.V."/>
        </authorList>
    </citation>
    <scope>PHOSPHORYLATION [LARGE SCALE ANALYSIS] AT SER-159</scope>
    <scope>IDENTIFICATION BY MASS SPECTROMETRY [LARGE SCALE ANALYSIS]</scope>
</reference>
<accession>Q9Z269</accession>
<dbReference type="EMBL" id="AF086631">
    <property type="protein sequence ID" value="AAD13580.1"/>
    <property type="molecule type" value="mRNA"/>
</dbReference>
<dbReference type="EMBL" id="BC065576">
    <property type="protein sequence ID" value="AAH65576.1"/>
    <property type="molecule type" value="mRNA"/>
</dbReference>
<dbReference type="RefSeq" id="NP_068619.1">
    <property type="nucleotide sequence ID" value="NM_021847.4"/>
</dbReference>
<dbReference type="SMR" id="Q9Z269"/>
<dbReference type="BioGRID" id="248831">
    <property type="interactions" value="1"/>
</dbReference>
<dbReference type="FunCoup" id="Q9Z269">
    <property type="interactions" value="2774"/>
</dbReference>
<dbReference type="IntAct" id="Q9Z269">
    <property type="interactions" value="2"/>
</dbReference>
<dbReference type="MINT" id="Q9Z269"/>
<dbReference type="STRING" id="10116.ENSRNOP00000007554"/>
<dbReference type="iPTMnet" id="Q9Z269"/>
<dbReference type="PhosphoSitePlus" id="Q9Z269"/>
<dbReference type="SwissPalm" id="Q9Z269"/>
<dbReference type="jPOST" id="Q9Z269"/>
<dbReference type="PaxDb" id="10116-ENSRNOP00000007554"/>
<dbReference type="ABCD" id="Q9Z269">
    <property type="antibodies" value="1 sequenced antibody"/>
</dbReference>
<dbReference type="Ensembl" id="ENSRNOT00000007554.5">
    <property type="protein sequence ID" value="ENSRNOP00000007554.2"/>
    <property type="gene ID" value="ENSRNOG00000005331.5"/>
</dbReference>
<dbReference type="GeneID" id="60431"/>
<dbReference type="KEGG" id="rno:60431"/>
<dbReference type="UCSC" id="RGD:68326">
    <property type="organism name" value="rat"/>
</dbReference>
<dbReference type="AGR" id="RGD:68326"/>
<dbReference type="CTD" id="9217"/>
<dbReference type="RGD" id="68326">
    <property type="gene designation" value="Vapb"/>
</dbReference>
<dbReference type="eggNOG" id="KOG0439">
    <property type="taxonomic scope" value="Eukaryota"/>
</dbReference>
<dbReference type="GeneTree" id="ENSGT00940000155769"/>
<dbReference type="HOGENOM" id="CLU_032848_0_1_1"/>
<dbReference type="InParanoid" id="Q9Z269"/>
<dbReference type="OMA" id="AENAKPH"/>
<dbReference type="OrthoDB" id="264603at2759"/>
<dbReference type="PhylomeDB" id="Q9Z269"/>
<dbReference type="TreeFam" id="TF317024"/>
<dbReference type="Reactome" id="R-RNO-8980692">
    <property type="pathway name" value="RHOA GTPase cycle"/>
</dbReference>
<dbReference type="Reactome" id="R-RNO-9013404">
    <property type="pathway name" value="RAC2 GTPase cycle"/>
</dbReference>
<dbReference type="Reactome" id="R-RNO-9013405">
    <property type="pathway name" value="RHOD GTPase cycle"/>
</dbReference>
<dbReference type="Reactome" id="R-RNO-9013408">
    <property type="pathway name" value="RHOG GTPase cycle"/>
</dbReference>
<dbReference type="PRO" id="PR:Q9Z269"/>
<dbReference type="Proteomes" id="UP000002494">
    <property type="component" value="Chromosome 3"/>
</dbReference>
<dbReference type="Bgee" id="ENSRNOG00000005331">
    <property type="expression patterns" value="Expressed in skeletal muscle tissue and 20 other cell types or tissues"/>
</dbReference>
<dbReference type="GO" id="GO:0005737">
    <property type="term" value="C:cytoplasm"/>
    <property type="evidence" value="ECO:0000266"/>
    <property type="project" value="RGD"/>
</dbReference>
<dbReference type="GO" id="GO:0005783">
    <property type="term" value="C:endoplasmic reticulum"/>
    <property type="evidence" value="ECO:0000314"/>
    <property type="project" value="SynGO"/>
</dbReference>
<dbReference type="GO" id="GO:0005789">
    <property type="term" value="C:endoplasmic reticulum membrane"/>
    <property type="evidence" value="ECO:0000250"/>
    <property type="project" value="UniProtKB"/>
</dbReference>
<dbReference type="GO" id="GO:0098978">
    <property type="term" value="C:glutamatergic synapse"/>
    <property type="evidence" value="ECO:0000314"/>
    <property type="project" value="SynGO"/>
</dbReference>
<dbReference type="GO" id="GO:0005794">
    <property type="term" value="C:Golgi apparatus"/>
    <property type="evidence" value="ECO:0000250"/>
    <property type="project" value="UniProtKB"/>
</dbReference>
<dbReference type="GO" id="GO:0016020">
    <property type="term" value="C:membrane"/>
    <property type="evidence" value="ECO:0000266"/>
    <property type="project" value="RGD"/>
</dbReference>
<dbReference type="GO" id="GO:0005886">
    <property type="term" value="C:plasma membrane"/>
    <property type="evidence" value="ECO:0000318"/>
    <property type="project" value="GO_Central"/>
</dbReference>
<dbReference type="GO" id="GO:0098794">
    <property type="term" value="C:postsynapse"/>
    <property type="evidence" value="ECO:0000314"/>
    <property type="project" value="SynGO"/>
</dbReference>
<dbReference type="GO" id="GO:0098793">
    <property type="term" value="C:presynapse"/>
    <property type="evidence" value="ECO:0000314"/>
    <property type="project" value="SynGO"/>
</dbReference>
<dbReference type="GO" id="GO:0048487">
    <property type="term" value="F:beta-tubulin binding"/>
    <property type="evidence" value="ECO:0000250"/>
    <property type="project" value="UniProtKB"/>
</dbReference>
<dbReference type="GO" id="GO:0019899">
    <property type="term" value="F:enzyme binding"/>
    <property type="evidence" value="ECO:0000250"/>
    <property type="project" value="UniProtKB"/>
</dbReference>
<dbReference type="GO" id="GO:0033149">
    <property type="term" value="F:FFAT motif binding"/>
    <property type="evidence" value="ECO:0000266"/>
    <property type="project" value="RGD"/>
</dbReference>
<dbReference type="GO" id="GO:0008017">
    <property type="term" value="F:microtubule binding"/>
    <property type="evidence" value="ECO:0000266"/>
    <property type="project" value="RGD"/>
</dbReference>
<dbReference type="GO" id="GO:0046982">
    <property type="term" value="F:protein heterodimerization activity"/>
    <property type="evidence" value="ECO:0000266"/>
    <property type="project" value="RGD"/>
</dbReference>
<dbReference type="GO" id="GO:0042803">
    <property type="term" value="F:protein homodimerization activity"/>
    <property type="evidence" value="ECO:0000250"/>
    <property type="project" value="UniProtKB"/>
</dbReference>
<dbReference type="GO" id="GO:0043495">
    <property type="term" value="F:protein-membrane adaptor activity"/>
    <property type="evidence" value="ECO:0000318"/>
    <property type="project" value="GO_Central"/>
</dbReference>
<dbReference type="GO" id="GO:0030301">
    <property type="term" value="P:cholesterol transport"/>
    <property type="evidence" value="ECO:0000266"/>
    <property type="project" value="RGD"/>
</dbReference>
<dbReference type="GO" id="GO:0090114">
    <property type="term" value="P:COPII-coated vesicle budding"/>
    <property type="evidence" value="ECO:0000266"/>
    <property type="project" value="RGD"/>
</dbReference>
<dbReference type="GO" id="GO:0090158">
    <property type="term" value="P:endoplasmic reticulum membrane organization"/>
    <property type="evidence" value="ECO:0000318"/>
    <property type="project" value="GO_Central"/>
</dbReference>
<dbReference type="GO" id="GO:0007029">
    <property type="term" value="P:endoplasmic reticulum organization"/>
    <property type="evidence" value="ECO:0000266"/>
    <property type="project" value="RGD"/>
</dbReference>
<dbReference type="GO" id="GO:0006888">
    <property type="term" value="P:endoplasmic reticulum to Golgi vesicle-mediated transport"/>
    <property type="evidence" value="ECO:0000266"/>
    <property type="project" value="RGD"/>
</dbReference>
<dbReference type="GO" id="GO:0030968">
    <property type="term" value="P:endoplasmic reticulum unfolded protein response"/>
    <property type="evidence" value="ECO:0000250"/>
    <property type="project" value="UniProtKB"/>
</dbReference>
<dbReference type="GO" id="GO:0061817">
    <property type="term" value="P:endoplasmic reticulum-plasma membrane tethering"/>
    <property type="evidence" value="ECO:0000318"/>
    <property type="project" value="GO_Central"/>
</dbReference>
<dbReference type="GO" id="GO:0006874">
    <property type="term" value="P:intracellular calcium ion homeostasis"/>
    <property type="evidence" value="ECO:0000250"/>
    <property type="project" value="UniProtKB"/>
</dbReference>
<dbReference type="GO" id="GO:0036498">
    <property type="term" value="P:IRE1-mediated unfolded protein response"/>
    <property type="evidence" value="ECO:0000250"/>
    <property type="project" value="UniProtKB"/>
</dbReference>
<dbReference type="GO" id="GO:0045070">
    <property type="term" value="P:positive regulation of viral genome replication"/>
    <property type="evidence" value="ECO:0000250"/>
    <property type="project" value="UniProtKB"/>
</dbReference>
<dbReference type="FunFam" id="2.60.40.10:FF:000334">
    <property type="entry name" value="vesicle-associated membrane protein-associated protein A isoform X1"/>
    <property type="match status" value="1"/>
</dbReference>
<dbReference type="Gene3D" id="2.60.40.10">
    <property type="entry name" value="Immunoglobulins"/>
    <property type="match status" value="1"/>
</dbReference>
<dbReference type="InterPro" id="IPR013783">
    <property type="entry name" value="Ig-like_fold"/>
</dbReference>
<dbReference type="InterPro" id="IPR000535">
    <property type="entry name" value="MSP_dom"/>
</dbReference>
<dbReference type="InterPro" id="IPR008962">
    <property type="entry name" value="PapD-like_sf"/>
</dbReference>
<dbReference type="InterPro" id="IPR016763">
    <property type="entry name" value="VAP"/>
</dbReference>
<dbReference type="PANTHER" id="PTHR10809">
    <property type="entry name" value="VESICLE-ASSOCIATED MEMBRANE PROTEIN-ASSOCIATED PROTEIN"/>
    <property type="match status" value="1"/>
</dbReference>
<dbReference type="PANTHER" id="PTHR10809:SF12">
    <property type="entry name" value="VESICLE-ASSOCIATED MEMBRANE PROTEIN-ASSOCIATED PROTEIN B_C"/>
    <property type="match status" value="1"/>
</dbReference>
<dbReference type="Pfam" id="PF00635">
    <property type="entry name" value="Motile_Sperm"/>
    <property type="match status" value="1"/>
</dbReference>
<dbReference type="PIRSF" id="PIRSF019693">
    <property type="entry name" value="VAMP-associated"/>
    <property type="match status" value="1"/>
</dbReference>
<dbReference type="SUPFAM" id="SSF49354">
    <property type="entry name" value="PapD-like"/>
    <property type="match status" value="1"/>
</dbReference>
<dbReference type="PROSITE" id="PS50202">
    <property type="entry name" value="MSP"/>
    <property type="match status" value="1"/>
</dbReference>
<name>VAPB_RAT</name>
<sequence length="243" mass="26916">MAKVEQVLSLEPQHELKFRGPFTDVVTTNLKLGNPTDRNVCFKVKTTAPRRYCVRPNSGVIDAGASLNVSVMLQPFDYDPNEKSKHKFMVQSMFAPPDTSDMEAVWKEAKPEDLMDSKLRCVFELPAENAKPHDVEINKIMPTSASKTEAPVAAKPLTSPLDDAEVKKVMEECRRLQGEVQRLREESRQLKEEDGLRARKALPSNSPMAALAASGKEEGLSARLLALVVLFFIVGVIIGKIAL</sequence>
<feature type="initiator methionine" description="Removed" evidence="1">
    <location>
        <position position="1"/>
    </location>
</feature>
<feature type="chain" id="PRO_0000213475" description="Vesicle-associated membrane protein-associated protein B">
    <location>
        <begin position="2"/>
        <end position="243"/>
    </location>
</feature>
<feature type="topological domain" description="Cytoplasmic" evidence="3">
    <location>
        <begin position="2"/>
        <end position="218"/>
    </location>
</feature>
<feature type="transmembrane region" description="Helical; Anchor for type IV membrane protein" evidence="3">
    <location>
        <begin position="219"/>
        <end position="239"/>
    </location>
</feature>
<feature type="domain" description="MSP" evidence="4">
    <location>
        <begin position="7"/>
        <end position="124"/>
    </location>
</feature>
<feature type="coiled-coil region" evidence="3">
    <location>
        <begin position="161"/>
        <end position="196"/>
    </location>
</feature>
<feature type="site" description="Involved in binding the phosphorylated serine of the phospho-FFAT motif" evidence="1">
    <location>
        <position position="43"/>
    </location>
</feature>
<feature type="modified residue" description="N-acetylalanine" evidence="1">
    <location>
        <position position="2"/>
    </location>
</feature>
<feature type="modified residue" description="Phosphoserine" evidence="1">
    <location>
        <position position="146"/>
    </location>
</feature>
<feature type="modified residue" description="Phosphoserine" evidence="7">
    <location>
        <position position="159"/>
    </location>
</feature>
<feature type="modified residue" description="Phosphoserine" evidence="1">
    <location>
        <position position="206"/>
    </location>
</feature>
<feature type="cross-link" description="Glycyl lysine isopeptide (Lys-Gly) (interchain with G-Cter in SUMO1)" evidence="1">
    <location>
        <position position="147"/>
    </location>
</feature>
<comment type="function">
    <text evidence="1">Endoplasmic reticulum (ER)-anchored protein that mediates the formation of contact sites between the ER and endosomes via interaction with FFAT motif-containing proteins such as STARD3 or WDR44. Interacts with STARD3 in a FFAT motif phosphorylation dependent manner. Via interaction with WDR44 participates in neosynthesized protein export. Participates in the endoplasmic reticulum unfolded protein response (UPR) by inducing ERN1/IRE1 activity. Involved in cellular calcium homeostasis regulation.</text>
</comment>
<comment type="subunit">
    <text evidence="1">Homodimer, and heterodimer with VAPA. Interacts with VAMP1 and VAMP2. Interacts (via MSP domain) with ZFYVE27. Interacts with RMDN3. Interacts with KIF5A in a ZFYVE27-dependent manner. Interacts (via MSP domain) with STARD3 (via phospho-FFAT motif). Interacts with STARD3NL (via FFAT motif). Interacts with CERT1. Interacts with PLEKHA3 and SACM1L to form a ternary complex. Interacts with VPS13A (via FFAT motif). Interacts with RB1CC1 (via phosphorylated FFAT motif), MIGA2 (via phosphorylated FFAT motif), RMDN3 (via phosphorylated FFAT motif), OSBPL1A (via FFAT motif), KCNB1 (via phosphorylated FFAT motif) and KCNB2 (via phosphorylated FFAT motif). Interacts (via MSP domain) with WDR44; the interactions connect the endoplasmic reticulum (ER) with the endosomal tubule (By similarity).</text>
</comment>
<comment type="subcellular location">
    <subcellularLocation>
        <location evidence="1">Endoplasmic reticulum membrane</location>
        <topology evidence="2">Single-pass type IV membrane protein</topology>
    </subcellularLocation>
    <text evidence="1">Present in mitochondria-associated membranes that are endoplasmic reticulum membrane regions closely apposed to the outer mitochondrial membrane.</text>
</comment>
<comment type="tissue specificity">
    <text>Ubiquitous.</text>
</comment>
<comment type="domain">
    <text evidence="1">The MSP domain binds the FFAT motif of many proteins.</text>
</comment>
<comment type="similarity">
    <text evidence="5">Belongs to the VAMP-associated protein (VAP) (TC 9.B.17) family.</text>
</comment>
<keyword id="KW-0007">Acetylation</keyword>
<keyword id="KW-0175">Coiled coil</keyword>
<keyword id="KW-0903">Direct protein sequencing</keyword>
<keyword id="KW-0256">Endoplasmic reticulum</keyword>
<keyword id="KW-1017">Isopeptide bond</keyword>
<keyword id="KW-0472">Membrane</keyword>
<keyword id="KW-0597">Phosphoprotein</keyword>
<keyword id="KW-1185">Reference proteome</keyword>
<keyword id="KW-0812">Transmembrane</keyword>
<keyword id="KW-1133">Transmembrane helix</keyword>
<keyword id="KW-0832">Ubl conjugation</keyword>
<keyword id="KW-0834">Unfolded protein response</keyword>
<evidence type="ECO:0000250" key="1">
    <source>
        <dbReference type="UniProtKB" id="O95292"/>
    </source>
</evidence>
<evidence type="ECO:0000250" key="2">
    <source>
        <dbReference type="UniProtKB" id="Q9P0L0"/>
    </source>
</evidence>
<evidence type="ECO:0000255" key="3"/>
<evidence type="ECO:0000255" key="4">
    <source>
        <dbReference type="PROSITE-ProRule" id="PRU00132"/>
    </source>
</evidence>
<evidence type="ECO:0000305" key="5"/>
<evidence type="ECO:0000312" key="6">
    <source>
        <dbReference type="RGD" id="68326"/>
    </source>
</evidence>
<evidence type="ECO:0007744" key="7">
    <source>
    </source>
</evidence>